<gene>
    <name evidence="1" type="primary">psbF</name>
</gene>
<reference key="1">
    <citation type="journal article" date="1984" name="FEBS Lett.">
        <title>Nucleotide sequence of the gene for apocytochrome b-559 on the spinach plastid chromosome: implications for the structure of the membrane protein.</title>
        <authorList>
            <person name="Hermann R.G."/>
            <person name="Alt J."/>
            <person name="Schiller B."/>
            <person name="Widger W.R."/>
            <person name="Cramer W.A."/>
        </authorList>
    </citation>
    <scope>NUCLEOTIDE SEQUENCE [GENOMIC DNA]</scope>
</reference>
<reference key="2">
    <citation type="submission" date="2002-07" db="EMBL/GenBank/DDBJ databases">
        <title>Parsing out signal and noise for seed-plant phylogenetic inference.</title>
        <authorList>
            <person name="Graham S.W."/>
            <person name="Rai H.S."/>
            <person name="Ikegami K."/>
            <person name="Reeves P.A."/>
            <person name="Olmstead R.G."/>
        </authorList>
    </citation>
    <scope>NUCLEOTIDE SEQUENCE [GENOMIC DNA]</scope>
</reference>
<reference key="3">
    <citation type="journal article" date="2001" name="Plant Mol. Biol.">
        <title>The plastid chromosome of spinach (Spinacia oleracea): complete nucleotide sequence and gene organization.</title>
        <authorList>
            <person name="Schmitz-Linneweber C."/>
            <person name="Maier R.M."/>
            <person name="Alcaraz J.-P."/>
            <person name="Cottet A."/>
            <person name="Herrmann R.G."/>
            <person name="Mache R."/>
        </authorList>
    </citation>
    <scope>NUCLEOTIDE SEQUENCE [LARGE SCALE GENOMIC DNA]</scope>
    <source>
        <strain>cv. Geant d'hiver</strain>
        <strain>cv. Monatol</strain>
    </source>
</reference>
<reference key="4">
    <citation type="journal article" date="1985" name="FEBS Lett.">
        <title>Evidence for a hetero-oligomeric structure of the chloroplast cytochrome b-559.</title>
        <authorList>
            <person name="Widger W.R."/>
            <person name="Cramer W.A."/>
            <person name="Hermodson M."/>
            <person name="Herrmann R.G."/>
        </authorList>
    </citation>
    <scope>PROTEIN SEQUENCE OF 2-9</scope>
    <scope>BLOCKAGE OF N-TERMINUS</scope>
</reference>
<reference key="5">
    <citation type="journal article" date="1989" name="FEBS Lett.">
        <title>N-terminal sequencing of photosystem II low-molecular-mass proteins. 5 and 4.1 kDa components of the O2-evolving core complex from higher plants.</title>
        <authorList>
            <person name="Ikeuchi M."/>
            <person name="Takio K."/>
            <person name="Inoue Y."/>
        </authorList>
    </citation>
    <scope>PROTEIN SEQUENCE OF 2-11</scope>
    <scope>BLOCKAGE OF N-TERMINUS</scope>
</reference>
<reference key="6">
    <citation type="journal article" date="1993" name="Mol. Gen. Genet.">
        <title>Tissue- and stage-specific modulation of RNA editing of the psbF and psbL transcript from spinach plastids -- a new regulatory mechanism?</title>
        <authorList>
            <person name="Bock R."/>
            <person name="Hagemann R."/>
            <person name="Koessel H."/>
            <person name="Kudla J."/>
        </authorList>
    </citation>
    <scope>RNA EDITING OF POSITION 25</scope>
</reference>
<reference key="7">
    <citation type="journal article" date="1998" name="J. Biol. Chem.">
        <title>Isolation and characterization of monomeric and dimeric CP47-reaction center photosystem II complexes.</title>
        <authorList>
            <person name="Zheleva D."/>
            <person name="Sharma J."/>
            <person name="Panico M."/>
            <person name="Morris H.R."/>
            <person name="Barber J."/>
        </authorList>
    </citation>
    <scope>PROTEIN SEQUENCE OF 2-8</scope>
    <scope>MASS SPECTROMETRY</scope>
</reference>
<sequence length="39" mass="4498">MTIDRTYPIFTVRWLAIHGLAVPTVFFLGSISAMQFIQR</sequence>
<feature type="initiator methionine" description="Removed" evidence="2 3 4">
    <location>
        <position position="1"/>
    </location>
</feature>
<feature type="chain" id="PRO_0000200455" description="Cytochrome b559 subunit beta">
    <location>
        <begin position="2"/>
        <end position="39"/>
    </location>
</feature>
<feature type="transmembrane region" description="Helical" evidence="1">
    <location>
        <begin position="14"/>
        <end position="30"/>
    </location>
</feature>
<feature type="binding site" description="axial binding residue" evidence="1">
    <location>
        <position position="18"/>
    </location>
    <ligand>
        <name>heme</name>
        <dbReference type="ChEBI" id="CHEBI:30413"/>
        <note>ligand shared with alpha subunit</note>
    </ligand>
    <ligandPart>
        <name>Fe</name>
        <dbReference type="ChEBI" id="CHEBI:18248"/>
    </ligandPart>
</feature>
<feature type="helix" evidence="5">
    <location>
        <begin position="12"/>
        <end position="35"/>
    </location>
</feature>
<dbReference type="EMBL" id="M35673">
    <property type="protein sequence ID" value="AAA84629.1"/>
    <property type="status" value="ALT_SEQ"/>
    <property type="molecule type" value="Genomic_DNA"/>
</dbReference>
<dbReference type="EMBL" id="AF528885">
    <property type="protein sequence ID" value="AAQ09328.1"/>
    <property type="status" value="ALT_SEQ"/>
    <property type="molecule type" value="Genomic_DNA"/>
</dbReference>
<dbReference type="EMBL" id="AJ400848">
    <property type="protein sequence ID" value="CAB88744.1"/>
    <property type="status" value="ALT_SEQ"/>
    <property type="molecule type" value="Genomic_DNA"/>
</dbReference>
<dbReference type="PIR" id="S35262">
    <property type="entry name" value="S35262"/>
</dbReference>
<dbReference type="RefSeq" id="NP_054951.1">
    <property type="nucleotide sequence ID" value="NC_002202.1"/>
</dbReference>
<dbReference type="PDB" id="3JCU">
    <property type="method" value="EM"/>
    <property type="resolution" value="3.20 A"/>
    <property type="chains" value="F/f=1-39"/>
</dbReference>
<dbReference type="PDB" id="8Z9D">
    <property type="method" value="EM"/>
    <property type="resolution" value="3.22 A"/>
    <property type="chains" value="F/FF/Ff/f=1-39"/>
</dbReference>
<dbReference type="PDBsum" id="3JCU"/>
<dbReference type="PDBsum" id="8Z9D"/>
<dbReference type="EMDB" id="EMD-39860"/>
<dbReference type="SMR" id="P60128"/>
<dbReference type="DIP" id="DIP-62012N"/>
<dbReference type="FunCoup" id="P60128">
    <property type="interactions" value="51"/>
</dbReference>
<dbReference type="IntAct" id="P60128">
    <property type="interactions" value="1"/>
</dbReference>
<dbReference type="STRING" id="3562.P60128"/>
<dbReference type="GeneID" id="2715612"/>
<dbReference type="KEGG" id="soe:2715612"/>
<dbReference type="InParanoid" id="P60128"/>
<dbReference type="OrthoDB" id="77at2759"/>
<dbReference type="Proteomes" id="UP001155700">
    <property type="component" value="Chloroplast Pltd"/>
</dbReference>
<dbReference type="GO" id="GO:0009535">
    <property type="term" value="C:chloroplast thylakoid membrane"/>
    <property type="evidence" value="ECO:0007669"/>
    <property type="project" value="UniProtKB-SubCell"/>
</dbReference>
<dbReference type="GO" id="GO:0009539">
    <property type="term" value="C:photosystem II reaction center"/>
    <property type="evidence" value="ECO:0007669"/>
    <property type="project" value="InterPro"/>
</dbReference>
<dbReference type="GO" id="GO:0009055">
    <property type="term" value="F:electron transfer activity"/>
    <property type="evidence" value="ECO:0007669"/>
    <property type="project" value="UniProtKB-UniRule"/>
</dbReference>
<dbReference type="GO" id="GO:0020037">
    <property type="term" value="F:heme binding"/>
    <property type="evidence" value="ECO:0007669"/>
    <property type="project" value="InterPro"/>
</dbReference>
<dbReference type="GO" id="GO:0005506">
    <property type="term" value="F:iron ion binding"/>
    <property type="evidence" value="ECO:0007669"/>
    <property type="project" value="UniProtKB-UniRule"/>
</dbReference>
<dbReference type="GO" id="GO:0009767">
    <property type="term" value="P:photosynthetic electron transport chain"/>
    <property type="evidence" value="ECO:0007669"/>
    <property type="project" value="InterPro"/>
</dbReference>
<dbReference type="HAMAP" id="MF_00643">
    <property type="entry name" value="PSII_PsbF"/>
    <property type="match status" value="1"/>
</dbReference>
<dbReference type="InterPro" id="IPR006241">
    <property type="entry name" value="PSII_cyt_b559_bsu"/>
</dbReference>
<dbReference type="InterPro" id="IPR006216">
    <property type="entry name" value="PSII_cyt_b559_CS"/>
</dbReference>
<dbReference type="InterPro" id="IPR013081">
    <property type="entry name" value="PSII_cyt_b559_N"/>
</dbReference>
<dbReference type="NCBIfam" id="TIGR01333">
    <property type="entry name" value="cyt_b559_beta"/>
    <property type="match status" value="1"/>
</dbReference>
<dbReference type="Pfam" id="PF00283">
    <property type="entry name" value="Cytochrom_B559"/>
    <property type="match status" value="1"/>
</dbReference>
<dbReference type="PIRSF" id="PIRSF000037">
    <property type="entry name" value="PsbF"/>
    <property type="match status" value="1"/>
</dbReference>
<dbReference type="SUPFAM" id="SSF161045">
    <property type="entry name" value="Cytochrome b559 subunits"/>
    <property type="match status" value="1"/>
</dbReference>
<dbReference type="PROSITE" id="PS00537">
    <property type="entry name" value="CYTOCHROME_B559"/>
    <property type="match status" value="1"/>
</dbReference>
<evidence type="ECO:0000255" key="1">
    <source>
        <dbReference type="HAMAP-Rule" id="MF_00643"/>
    </source>
</evidence>
<evidence type="ECO:0000269" key="2">
    <source>
    </source>
</evidence>
<evidence type="ECO:0000269" key="3">
    <source>
    </source>
</evidence>
<evidence type="ECO:0000269" key="4">
    <source ref="4"/>
</evidence>
<evidence type="ECO:0007829" key="5">
    <source>
        <dbReference type="PDB" id="3JCU"/>
    </source>
</evidence>
<organism>
    <name type="scientific">Spinacia oleracea</name>
    <name type="common">Spinach</name>
    <dbReference type="NCBI Taxonomy" id="3562"/>
    <lineage>
        <taxon>Eukaryota</taxon>
        <taxon>Viridiplantae</taxon>
        <taxon>Streptophyta</taxon>
        <taxon>Embryophyta</taxon>
        <taxon>Tracheophyta</taxon>
        <taxon>Spermatophyta</taxon>
        <taxon>Magnoliopsida</taxon>
        <taxon>eudicotyledons</taxon>
        <taxon>Gunneridae</taxon>
        <taxon>Pentapetalae</taxon>
        <taxon>Caryophyllales</taxon>
        <taxon>Chenopodiaceae</taxon>
        <taxon>Chenopodioideae</taxon>
        <taxon>Anserineae</taxon>
        <taxon>Spinacia</taxon>
    </lineage>
</organism>
<name>PSBF_SPIOL</name>
<accession>P60128</accession>
<accession>P05171</accession>
<accession>P09198</accession>
<accession>Q6EYP5</accession>
<accession>Q95H58</accession>
<accession>Q9M3L1</accession>
<comment type="function">
    <text evidence="1">This b-type cytochrome is tightly associated with the reaction center of photosystem II (PSII). PSII is a light-driven water:plastoquinone oxidoreductase that uses light energy to abstract electrons from H(2)O, generating O(2) and a proton gradient subsequently used for ATP formation. It consists of a core antenna complex that captures photons, and an electron transfer chain that converts photonic excitation into a charge separation.</text>
</comment>
<comment type="cofactor">
    <cofactor evidence="1">
        <name>heme b</name>
        <dbReference type="ChEBI" id="CHEBI:60344"/>
    </cofactor>
    <text evidence="1">With its partner (PsbE) binds heme. PSII binds additional chlorophylls, carotenoids and specific lipids.</text>
</comment>
<comment type="subunit">
    <text evidence="1">Heterodimer of an alpha subunit and a beta subunit. PSII is composed of 1 copy each of membrane proteins PsbA, PsbB, PsbC, PsbD, PsbE, PsbF, PsbH, PsbI, PsbJ, PsbK, PsbL, PsbM, PsbT, PsbX, PsbY, PsbZ, Psb30/Ycf12, at least 3 peripheral proteins of the oxygen-evolving complex and a large number of cofactors. It forms dimeric complexes.</text>
</comment>
<comment type="subcellular location">
    <subcellularLocation>
        <location evidence="1">Plastid</location>
        <location evidence="1">Chloroplast thylakoid membrane</location>
        <topology evidence="1">Single-pass membrane protein</topology>
    </subcellularLocation>
</comment>
<comment type="PTM">
    <text>The N-terminus is blocked.</text>
</comment>
<comment type="RNA editing">
    <location>
        <position position="26"/>
    </location>
</comment>
<comment type="mass spectrometry" mass="4409.1" method="MALDI" evidence="3"/>
<comment type="similarity">
    <text evidence="1">Belongs to the PsbE/PsbF family.</text>
</comment>
<protein>
    <recommendedName>
        <fullName evidence="1">Cytochrome b559 subunit beta</fullName>
    </recommendedName>
    <alternativeName>
        <fullName evidence="1">PSII reaction center subunit VI</fullName>
    </alternativeName>
</protein>
<proteinExistence type="evidence at protein level"/>
<keyword id="KW-0002">3D-structure</keyword>
<keyword id="KW-0150">Chloroplast</keyword>
<keyword id="KW-0903">Direct protein sequencing</keyword>
<keyword id="KW-0249">Electron transport</keyword>
<keyword id="KW-0349">Heme</keyword>
<keyword id="KW-0408">Iron</keyword>
<keyword id="KW-0472">Membrane</keyword>
<keyword id="KW-0479">Metal-binding</keyword>
<keyword id="KW-0602">Photosynthesis</keyword>
<keyword id="KW-0604">Photosystem II</keyword>
<keyword id="KW-0934">Plastid</keyword>
<keyword id="KW-1185">Reference proteome</keyword>
<keyword id="KW-0691">RNA editing</keyword>
<keyword id="KW-0793">Thylakoid</keyword>
<keyword id="KW-0812">Transmembrane</keyword>
<keyword id="KW-1133">Transmembrane helix</keyword>
<keyword id="KW-0813">Transport</keyword>
<geneLocation type="chloroplast"/>